<feature type="chain" id="PRO_1000045855" description="Flagellar hook-basal body complex protein FliE">
    <location>
        <begin position="1"/>
        <end position="103"/>
    </location>
</feature>
<dbReference type="EMBL" id="CP000783">
    <property type="protein sequence ID" value="ABU76523.1"/>
    <property type="molecule type" value="Genomic_DNA"/>
</dbReference>
<dbReference type="RefSeq" id="WP_004384862.1">
    <property type="nucleotide sequence ID" value="NC_009778.1"/>
</dbReference>
<dbReference type="SMR" id="A7MJJ7"/>
<dbReference type="GeneID" id="56730132"/>
<dbReference type="KEGG" id="esa:ESA_01261"/>
<dbReference type="HOGENOM" id="CLU_147249_0_2_6"/>
<dbReference type="Proteomes" id="UP000000260">
    <property type="component" value="Chromosome"/>
</dbReference>
<dbReference type="GO" id="GO:0009425">
    <property type="term" value="C:bacterial-type flagellum basal body"/>
    <property type="evidence" value="ECO:0007669"/>
    <property type="project" value="UniProtKB-SubCell"/>
</dbReference>
<dbReference type="GO" id="GO:0003774">
    <property type="term" value="F:cytoskeletal motor activity"/>
    <property type="evidence" value="ECO:0007669"/>
    <property type="project" value="InterPro"/>
</dbReference>
<dbReference type="GO" id="GO:0005198">
    <property type="term" value="F:structural molecule activity"/>
    <property type="evidence" value="ECO:0007669"/>
    <property type="project" value="InterPro"/>
</dbReference>
<dbReference type="GO" id="GO:0071973">
    <property type="term" value="P:bacterial-type flagellum-dependent cell motility"/>
    <property type="evidence" value="ECO:0007669"/>
    <property type="project" value="InterPro"/>
</dbReference>
<dbReference type="HAMAP" id="MF_00724">
    <property type="entry name" value="FliE"/>
    <property type="match status" value="1"/>
</dbReference>
<dbReference type="InterPro" id="IPR001624">
    <property type="entry name" value="FliE"/>
</dbReference>
<dbReference type="NCBIfam" id="TIGR00205">
    <property type="entry name" value="fliE"/>
    <property type="match status" value="1"/>
</dbReference>
<dbReference type="PANTHER" id="PTHR34653">
    <property type="match status" value="1"/>
</dbReference>
<dbReference type="PANTHER" id="PTHR34653:SF1">
    <property type="entry name" value="FLAGELLAR HOOK-BASAL BODY COMPLEX PROTEIN FLIE"/>
    <property type="match status" value="1"/>
</dbReference>
<dbReference type="Pfam" id="PF02049">
    <property type="entry name" value="FliE"/>
    <property type="match status" value="1"/>
</dbReference>
<dbReference type="PRINTS" id="PR01006">
    <property type="entry name" value="FLGHOOKFLIE"/>
</dbReference>
<accession>A7MJJ7</accession>
<comment type="subcellular location">
    <subcellularLocation>
        <location evidence="1">Bacterial flagellum basal body</location>
    </subcellularLocation>
</comment>
<comment type="similarity">
    <text evidence="1">Belongs to the FliE family.</text>
</comment>
<proteinExistence type="inferred from homology"/>
<sequence>MAIQGIEGVLQQMQATMQVARNNAVETPPSVSFAGELQAALGRISDTQNAARTQAEKFAIGTPGVALNDVMVDLQKSSISLQMGIQVRNKLVAAYQDIMNMQV</sequence>
<evidence type="ECO:0000255" key="1">
    <source>
        <dbReference type="HAMAP-Rule" id="MF_00724"/>
    </source>
</evidence>
<organism>
    <name type="scientific">Cronobacter sakazakii (strain ATCC BAA-894)</name>
    <name type="common">Enterobacter sakazakii</name>
    <dbReference type="NCBI Taxonomy" id="290339"/>
    <lineage>
        <taxon>Bacteria</taxon>
        <taxon>Pseudomonadati</taxon>
        <taxon>Pseudomonadota</taxon>
        <taxon>Gammaproteobacteria</taxon>
        <taxon>Enterobacterales</taxon>
        <taxon>Enterobacteriaceae</taxon>
        <taxon>Cronobacter</taxon>
    </lineage>
</organism>
<reference key="1">
    <citation type="journal article" date="2010" name="PLoS ONE">
        <title>Genome sequence of Cronobacter sakazakii BAA-894 and comparative genomic hybridization analysis with other Cronobacter species.</title>
        <authorList>
            <person name="Kucerova E."/>
            <person name="Clifton S.W."/>
            <person name="Xia X.Q."/>
            <person name="Long F."/>
            <person name="Porwollik S."/>
            <person name="Fulton L."/>
            <person name="Fronick C."/>
            <person name="Minx P."/>
            <person name="Kyung K."/>
            <person name="Warren W."/>
            <person name="Fulton R."/>
            <person name="Feng D."/>
            <person name="Wollam A."/>
            <person name="Shah N."/>
            <person name="Bhonagiri V."/>
            <person name="Nash W.E."/>
            <person name="Hallsworth-Pepin K."/>
            <person name="Wilson R.K."/>
            <person name="McClelland M."/>
            <person name="Forsythe S.J."/>
        </authorList>
    </citation>
    <scope>NUCLEOTIDE SEQUENCE [LARGE SCALE GENOMIC DNA]</scope>
    <source>
        <strain>ATCC BAA-894</strain>
    </source>
</reference>
<gene>
    <name evidence="1" type="primary">fliE</name>
    <name type="ordered locus">ESA_01261</name>
</gene>
<protein>
    <recommendedName>
        <fullName evidence="1">Flagellar hook-basal body complex protein FliE</fullName>
    </recommendedName>
</protein>
<keyword id="KW-0975">Bacterial flagellum</keyword>
<keyword id="KW-1185">Reference proteome</keyword>
<name>FLIE_CROS8</name>